<feature type="signal peptide" evidence="3">
    <location>
        <begin position="1"/>
        <end position="23"/>
    </location>
</feature>
<feature type="chain" id="PRO_0000024713" description="Melanocyte protein PMEL">
    <location>
        <begin position="24"/>
        <end position="626"/>
    </location>
</feature>
<feature type="chain" id="PRO_0000386649" description="M-alpha" evidence="1">
    <location>
        <begin position="24"/>
        <end position="433"/>
    </location>
</feature>
<feature type="chain" id="PRO_0000386650" description="M-beta" evidence="1">
    <location>
        <begin position="436"/>
        <end position="626"/>
    </location>
</feature>
<feature type="topological domain" description="Lumenal" evidence="11">
    <location>
        <begin position="436"/>
        <end position="561"/>
    </location>
</feature>
<feature type="transmembrane region" description="Helical" evidence="3">
    <location>
        <begin position="562"/>
        <end position="582"/>
    </location>
</feature>
<feature type="topological domain" description="Cytoplasmic" evidence="11">
    <location>
        <begin position="583"/>
        <end position="626"/>
    </location>
</feature>
<feature type="domain" description="PKD" evidence="4">
    <location>
        <begin position="254"/>
        <end position="291"/>
    </location>
</feature>
<feature type="repeat" description="1" evidence="3">
    <location>
        <begin position="301"/>
        <end position="313"/>
    </location>
</feature>
<feature type="repeat" description="2" evidence="3">
    <location>
        <begin position="314"/>
        <end position="326"/>
    </location>
</feature>
<feature type="repeat" description="3" evidence="3">
    <location>
        <begin position="327"/>
        <end position="339"/>
    </location>
</feature>
<feature type="repeat" description="4" evidence="3">
    <location>
        <begin position="340"/>
        <end position="352"/>
    </location>
</feature>
<feature type="repeat" description="5" evidence="3">
    <location>
        <begin position="353"/>
        <end position="365"/>
    </location>
</feature>
<feature type="repeat" description="6" evidence="3">
    <location>
        <begin position="366"/>
        <end position="378"/>
    </location>
</feature>
<feature type="repeat" description="7" evidence="3">
    <location>
        <begin position="379"/>
        <end position="391"/>
    </location>
</feature>
<feature type="repeat" description="8" evidence="3">
    <location>
        <begin position="392"/>
        <end position="404"/>
    </location>
</feature>
<feature type="repeat" description="9" evidence="3">
    <location>
        <begin position="405"/>
        <end position="417"/>
    </location>
</feature>
<feature type="repeat" description="10" evidence="3">
    <location>
        <begin position="418"/>
        <end position="430"/>
    </location>
</feature>
<feature type="region of interest" description="Amyloidogenic unit" evidence="2">
    <location>
        <begin position="147"/>
        <end position="222"/>
    </location>
</feature>
<feature type="region of interest" description="10 X 13 AA approximate tandem repeats, RPT domain" evidence="3 12">
    <location>
        <begin position="301"/>
        <end position="430"/>
    </location>
</feature>
<feature type="region of interest" description="Disordered" evidence="5">
    <location>
        <begin position="315"/>
        <end position="349"/>
    </location>
</feature>
<feature type="region of interest" description="Disordered" evidence="5">
    <location>
        <begin position="379"/>
        <end position="422"/>
    </location>
</feature>
<feature type="region of interest" description="Kringle-like fold" evidence="2">
    <location>
        <begin position="482"/>
        <end position="532"/>
    </location>
</feature>
<feature type="compositionally biased region" description="Low complexity" evidence="5">
    <location>
        <begin position="326"/>
        <end position="348"/>
    </location>
</feature>
<feature type="compositionally biased region" description="Low complexity" evidence="5">
    <location>
        <begin position="379"/>
        <end position="396"/>
    </location>
</feature>
<feature type="compositionally biased region" description="Polar residues" evidence="5">
    <location>
        <begin position="411"/>
        <end position="420"/>
    </location>
</feature>
<feature type="site" description="Essential for fibril formation" evidence="2">
    <location>
        <position position="150"/>
    </location>
</feature>
<feature type="site" description="Essential for fibril formation" evidence="2">
    <location>
        <position position="159"/>
    </location>
</feature>
<feature type="site" description="Cleavage; by furin-like proprotein convertase" evidence="2">
    <location>
        <begin position="435"/>
        <end position="436"/>
    </location>
</feature>
<feature type="site" description="Cleavage; by ADAM metalloproteinases" evidence="2">
    <location>
        <begin position="549"/>
        <end position="550"/>
    </location>
</feature>
<feature type="site" description="Endocytosis signal" evidence="2">
    <location>
        <begin position="620"/>
        <end position="621"/>
    </location>
</feature>
<feature type="site" description="ER exit signal" evidence="2">
    <location>
        <position position="626"/>
    </location>
</feature>
<feature type="glycosylation site" description="N-linked (GlcNAc...) asparagine" evidence="3">
    <location>
        <position position="80"/>
    </location>
</feature>
<feature type="glycosylation site" description="N-linked (GlcNAc...) asparagine" evidence="3">
    <location>
        <position position="105"/>
    </location>
</feature>
<feature type="glycosylation site" description="N-linked (GlcNAc...) asparagine" evidence="3">
    <location>
        <position position="110"/>
    </location>
</feature>
<feature type="glycosylation site" description="N-linked (GlcNAc...) asparagine" evidence="3">
    <location>
        <position position="534"/>
    </location>
</feature>
<feature type="disulfide bond" description="Interchain (in monomeric form)" evidence="2">
    <location>
        <begin position="300"/>
        <end status="unknown"/>
    </location>
</feature>
<feature type="disulfide bond" description="Intrachain (in dimeric form)" evidence="2">
    <location>
        <begin position="300"/>
        <end status="unknown"/>
    </location>
</feature>
<feature type="sequence variant" description="In Silver." evidence="6">
    <location>
        <begin position="602"/>
        <end position="626"/>
    </location>
</feature>
<feature type="mutagenesis site" description="Forms abnormal block-like assemblies devoid of fibrillar sheet structure; when associated with 304-P--T-429 del." evidence="10">
    <original>S</original>
    <variation>G</variation>
    <location>
        <position position="299"/>
    </location>
</feature>
<feature type="mutagenesis site" description="Forms abnormal block-like assemblies devoid of fibrillar sheet structure; when associated with 304-P--T-429 del." evidence="10">
    <original>S</original>
    <variation>P</variation>
    <location>
        <position position="302"/>
    </location>
</feature>
<feature type="mutagenesis site" description="Forms abnormal block-like assemblies devoid of fibrillar sheet structure; when associated with 304-P--T-429 del." evidence="10">
    <original>S</original>
    <variation>G</variation>
    <location>
        <position position="303"/>
    </location>
</feature>
<feature type="mutagenesis site" description="Forms abnormal block-like assemblies devoid of fibrillar sheet structure. Does not affect protein maturation. Does not affect fibril formation." evidence="10">
    <location>
        <begin position="304"/>
        <end position="429"/>
    </location>
</feature>
<feature type="sequence conflict" description="In Ref. 1; AAA69538." evidence="11" ref="1">
    <original>M</original>
    <variation>MV</variation>
    <location>
        <position position="1"/>
    </location>
</feature>
<feature type="sequence conflict" description="In Ref. 1; AAA69538." evidence="11" ref="1">
    <original>L</original>
    <variation>S</variation>
    <location>
        <position position="169"/>
    </location>
</feature>
<feature type="sequence conflict" description="In Ref. 1; AAA69538." evidence="11" ref="1">
    <original>G</original>
    <variation>R</variation>
    <location>
        <position position="174"/>
    </location>
</feature>
<feature type="sequence conflict" description="In Ref. 1; AAA69538." evidence="11" ref="1">
    <original>HRHRLKKQGSVSQMPHGSTHWLRLPPVF</original>
    <variation>LGIDLRSRAQFPKCHMVALTAAPASGL</variation>
    <location>
        <begin position="582"/>
        <end position="609"/>
    </location>
</feature>
<accession>Q60696</accession>
<accession>Q9CZB2</accession>
<sequence>MGVQRRSFLPVLVLSALLAVGALEGSRNQDWLGVPRQLVTKTWNRQLYPEWTEVQGSNCWRGGQVSLRVINDGPTLVGANASFSIALHFPGSQKVLPDGQVIWANNTIINGSQVWGGQPVYPQEPDDACVFPDGGPCPSGPKPPKRSFVYVWKTWGKYWQVLGGPVSRLSIATGHAKLGTHTMEVTVYHRRGSQSYVPLAHASSTFTITDQVPFSVSVSQLQALDGETKHFLRNHPLIFALQLHDPSGYLAEADLSYTWDFGDGTGTLISRALDVTHTYLESGSVTAQVVLQAAIPLVSCGSSPVPGTTDGYMPTAEAPGTTSRQGTTTKVVGTTPGQMPTTQPSGTTVVQMPTTEVTATTSEQMLTSAVIDTTLAEVSTTEGTGTTPTRPSGTTVAQATTTEGPDASPLLPTQSSTGSISPLLDDTDTIMLVKRQVPLDCVLYRYGSFSLALDIVQGIESAEILQAVPFSEGDAFELTVSCQGGLPKEACMDISSPGCQPPAQRLCQSVPPSPDCQLVLHQVLKGGSGTYCLNVSLADANSLAVASTQLVVPGQDGGLGQAPLLVGILLVLVAVVLASLIHRHRLKKQGSVSQMPHGSTHWLRLPPVFRARGLGENSPLLSGQQV</sequence>
<evidence type="ECO:0000250" key="1"/>
<evidence type="ECO:0000250" key="2">
    <source>
        <dbReference type="UniProtKB" id="P40967"/>
    </source>
</evidence>
<evidence type="ECO:0000255" key="3"/>
<evidence type="ECO:0000255" key="4">
    <source>
        <dbReference type="PROSITE-ProRule" id="PRU00151"/>
    </source>
</evidence>
<evidence type="ECO:0000256" key="5">
    <source>
        <dbReference type="SAM" id="MobiDB-lite"/>
    </source>
</evidence>
<evidence type="ECO:0000269" key="6">
    <source>
    </source>
</evidence>
<evidence type="ECO:0000269" key="7">
    <source>
    </source>
</evidence>
<evidence type="ECO:0000269" key="8">
    <source>
    </source>
</evidence>
<evidence type="ECO:0000269" key="9">
    <source>
    </source>
</evidence>
<evidence type="ECO:0000269" key="10">
    <source>
    </source>
</evidence>
<evidence type="ECO:0000305" key="11"/>
<evidence type="ECO:0000305" key="12">
    <source>
    </source>
</evidence>
<keyword id="KW-0165">Cleavage on pair of basic residues</keyword>
<keyword id="KW-0225">Disease variant</keyword>
<keyword id="KW-1015">Disulfide bond</keyword>
<keyword id="KW-0256">Endoplasmic reticulum</keyword>
<keyword id="KW-0967">Endosome</keyword>
<keyword id="KW-0325">Glycoprotein</keyword>
<keyword id="KW-0333">Golgi apparatus</keyword>
<keyword id="KW-0470">Melanin biosynthesis</keyword>
<keyword id="KW-0472">Membrane</keyword>
<keyword id="KW-1185">Reference proteome</keyword>
<keyword id="KW-0677">Repeat</keyword>
<keyword id="KW-0964">Secreted</keyword>
<keyword id="KW-0730">Sialic acid</keyword>
<keyword id="KW-0732">Signal</keyword>
<keyword id="KW-0812">Transmembrane</keyword>
<keyword id="KW-1133">Transmembrane helix</keyword>
<proteinExistence type="evidence at protein level"/>
<protein>
    <recommendedName>
        <fullName>Melanocyte protein PMEL</fullName>
    </recommendedName>
    <alternativeName>
        <fullName>Melanocyte protein Pmel 17</fullName>
    </alternativeName>
    <alternativeName>
        <fullName>Premelanosome protein</fullName>
    </alternativeName>
    <alternativeName>
        <fullName>Silver locus protein</fullName>
    </alternativeName>
    <component>
        <recommendedName>
            <fullName>M-alpha</fullName>
        </recommendedName>
    </component>
    <component>
        <recommendedName>
            <fullName>M-beta</fullName>
        </recommendedName>
    </component>
</protein>
<comment type="function">
    <text evidence="2 9 10">Forms physiological amyloids that play a central role in melanosome morphogenesis and pigmentation. The maturation of unpigmented premelanosomes from stage I to II is marked by assembly of processed amyloidogenic fragments into parallel fibrillar sheets, which elongate the vesicle into a striated ellipsoidal shape. In pigmented stage III and IV melanosomes, the amyloid matrix serves as a platform where eumelanin precursors accumulate at high local concentrations for pigment formation. May prevent pigmentation-associated toxicity by sequestering toxic reaction intermediates of eumelanin biosynthesis pathway.</text>
</comment>
<comment type="subunit">
    <text evidence="2">Homodimer; disulfide-linked. Dimerization in the endoplasmic reticulum and early Golgi prevents premature fibril formation. The dimers are resolved to monomers in late- or post-Golgi compartments. Heterooligomer; amyloid-type. Processed amyloidogenic fragments assemble into fibrils that further organize into beta-sheet quaternary amyloid structures. Interacts (via luminal C-terminal fragment) with CD63; this is important for sorting of the luminal fragment in tetraspanin rich microdomains in stage I melanosomes to prevent premature lysosomal degradation. Interacts with APOE; this allows the loading of the luminal fragment on ILVs to induce fibril nucleation. Interacts with MLANA.</text>
</comment>
<comment type="subcellular location">
    <subcellularLocation>
        <location evidence="2">Endoplasmic reticulum membrane</location>
        <topology evidence="3">Single-pass type I membrane protein</topology>
    </subcellularLocation>
    <subcellularLocation>
        <location evidence="2">Golgi apparatus</location>
        <location evidence="2">cis-Golgi network membrane</location>
        <topology evidence="3">Single-pass type I membrane protein</topology>
    </subcellularLocation>
    <subcellularLocation>
        <location evidence="2">Endosome</location>
        <location evidence="2">Multivesicular body</location>
    </subcellularLocation>
    <subcellularLocation>
        <location evidence="2">Melanosome</location>
    </subcellularLocation>
    <subcellularLocation>
        <location evidence="2">Extracellular vesicle</location>
    </subcellularLocation>
    <subcellularLocation>
        <location evidence="2">Secreted</location>
    </subcellularLocation>
    <text evidence="2">Identified by mass spectrometry in melanosome fractions from stage I to stage IV. Localizes predominantly to intralumenal vesicles (ILVs) within multivesicular bodies. Associates with ILVs found within the lumen of premelanosomes and melanosomes and particularly in compartments that serve as precursors to the striated stage II premelanosomes. Sorted to stage I melanosomes following its processing in the ER and cis-Golgi. Transiently expressed at the cell surface before targeting to early melanosomes. Colocalizes with BACE2 in stage I and II melanosomes. Colocalizes with CD63 at exosomes and in intraluminal vesicles within multivesicular endosomes.</text>
</comment>
<comment type="tissue specificity">
    <text evidence="7 9">Expressed in skin melanocytes, choroid melanocytes, and retinal pigmented cells.</text>
</comment>
<comment type="domain">
    <text evidence="2">The core amyloid fragment (CAF) represents the amyloidogenic unit of melanosomal fibrils.</text>
</comment>
<comment type="domain">
    <text evidence="10">The highly O-glycosylated repeat (RPT) domain drives the generation of the fibrillar amyloid sheet structures within melanosomes. The O-glycosylation sites rather than its primary amino acid sequence are conserved across species.</text>
</comment>
<comment type="domain">
    <text evidence="2">The Kringle-like domain (KLD) contains six highly conserved cysteine residues that are critical for dimer formation.</text>
</comment>
<comment type="PTM">
    <text evidence="2 8">N- and O-glycosylated. A small amount of P1/P100 (major form) undergoes glycosylation in ER and Golgi compartments to yield P2/P120 (minor form). The mature P2 form leaves the trans-Golgi network and is mainly targeted to stage I melanosomes via the plasma membrane and clathrin-mediated endocytosis. Stage II melanosomes harbor only Golgi-modified fragments that are derived from M-alpha and that bear sialylated O-linked oligosaccharides. O-glycosylation of the RPT region is a conserved feature likely involved in amyloid sheet separation via electrostatic repulsion.</text>
</comment>
<comment type="PTM">
    <text evidence="2 7">Undergoes multiple proteolytic processing. In a post-Golgi prelysosomal compartment, P2 is cleaved by a furin-like proprotein convertase (PC) into two disulfide-linked subunits: a large lumenal subunit, M-alpha/ME20-S, and an integral membrane subunit, M-beta. Despite cleavage, only a small fraction of M-alpha is secreted, as most M-alpha and M-beta remain associated with each other intracellularly via a disulfide bond. Once targeted to stage I melanosomes, beta-secretase BACE2 cleaves the M-beta fragment to release the amyloidogenic luminal fragment containing M-alpha and a small portion of M-beta N-terminus. M-alpha is further cleaved by metalloproteases and still unknown proteases to yield subfragments that ultimately assemble into amyloid fibrils. The C-terminal fragment of M-beta is processed by the gamma-secretase complex to release a short intracytoplasmic domain.</text>
</comment>
<comment type="disease">
    <text evidence="11">Defects in Silver mutants are the cause of the silver coat color which seems to be due to premature death of pigment cells during the hair cycle.</text>
</comment>
<comment type="disruption phenotype">
    <text evidence="9">Mutant mice are fertile and have normal development. They display coat color dilution phenotype especially in the brown background. This is associated with abnormal melanogenesis characterized by spherical melanosomes and substantial reduction in eumelanin content in hair.</text>
</comment>
<comment type="similarity">
    <text evidence="11">Belongs to the PMEL/NMB family.</text>
</comment>
<reference key="1">
    <citation type="journal article" date="1995" name="Nucleic Acids Res.">
        <title>Mouse silver mutation is caused by a single base insertion in the putative cytoplasmic domain of Pmel 17.</title>
        <authorList>
            <person name="Kwon B.S."/>
            <person name="Halaban R."/>
            <person name="Ponnazhagan S."/>
            <person name="Kim K."/>
            <person name="Chintamaneni C."/>
            <person name="Bennett D."/>
            <person name="Pickard R.T."/>
        </authorList>
    </citation>
    <scope>NUCLEOTIDE SEQUENCE [MRNA]</scope>
    <source>
        <strain>C57BL/6J</strain>
        <tissue>Skin</tissue>
    </source>
</reference>
<reference key="2">
    <citation type="journal article" date="2019" name="Sci. Rep.">
        <title>Repeat domain-associated O-glycans govern PMEL fibrillar sheet architecture.</title>
        <authorList>
            <person name="Graham M."/>
            <person name="Tzika A.C."/>
            <person name="Mitchell S.M."/>
            <person name="Liu X."/>
            <person name="Leonhardt R.M."/>
        </authorList>
    </citation>
    <scope>NUCLEOTIDE SEQUENCE [MRNA]</scope>
    <scope>FUNCTION</scope>
    <scope>RPT DOMAIN</scope>
    <scope>MUTAGENESIS OF 304-PHE--THR-429; SER-299; SER-302 AND SER-303</scope>
</reference>
<reference key="3">
    <citation type="journal article" date="2001" name="Nature">
        <title>Functional annotation of a full-length mouse cDNA collection.</title>
        <authorList>
            <person name="Kawai J."/>
            <person name="Shinagawa A."/>
            <person name="Shibata K."/>
            <person name="Yoshino M."/>
            <person name="Itoh M."/>
            <person name="Ishii Y."/>
            <person name="Arakawa T."/>
            <person name="Hara A."/>
            <person name="Fukunishi Y."/>
            <person name="Konno H."/>
            <person name="Adachi J."/>
            <person name="Fukuda S."/>
            <person name="Aizawa K."/>
            <person name="Izawa M."/>
            <person name="Nishi K."/>
            <person name="Kiyosawa H."/>
            <person name="Kondo S."/>
            <person name="Yamanaka I."/>
            <person name="Saito T."/>
            <person name="Okazaki Y."/>
            <person name="Gojobori T."/>
            <person name="Bono H."/>
            <person name="Kasukawa T."/>
            <person name="Saito R."/>
            <person name="Kadota K."/>
            <person name="Matsuda H.A."/>
            <person name="Ashburner M."/>
            <person name="Batalov S."/>
            <person name="Casavant T."/>
            <person name="Fleischmann W."/>
            <person name="Gaasterland T."/>
            <person name="Gissi C."/>
            <person name="King B."/>
            <person name="Kochiwa H."/>
            <person name="Kuehl P."/>
            <person name="Lewis S."/>
            <person name="Matsuo Y."/>
            <person name="Nikaido I."/>
            <person name="Pesole G."/>
            <person name="Quackenbush J."/>
            <person name="Schriml L.M."/>
            <person name="Staubli F."/>
            <person name="Suzuki R."/>
            <person name="Tomita M."/>
            <person name="Wagner L."/>
            <person name="Washio T."/>
            <person name="Sakai K."/>
            <person name="Okido T."/>
            <person name="Furuno M."/>
            <person name="Aono H."/>
            <person name="Baldarelli R."/>
            <person name="Barsh G."/>
            <person name="Blake J."/>
            <person name="Boffelli D."/>
            <person name="Bojunga N."/>
            <person name="Carninci P."/>
            <person name="de Bonaldo M.F."/>
            <person name="Brownstein M.J."/>
            <person name="Bult C."/>
            <person name="Fletcher C."/>
            <person name="Fujita M."/>
            <person name="Gariboldi M."/>
            <person name="Gustincich S."/>
            <person name="Hill D."/>
            <person name="Hofmann M."/>
            <person name="Hume D.A."/>
            <person name="Kamiya M."/>
            <person name="Lee N.H."/>
            <person name="Lyons P."/>
            <person name="Marchionni L."/>
            <person name="Mashima J."/>
            <person name="Mazzarelli J."/>
            <person name="Mombaerts P."/>
            <person name="Nordone P."/>
            <person name="Ring B."/>
            <person name="Ringwald M."/>
            <person name="Rodriguez I."/>
            <person name="Sakamoto N."/>
            <person name="Sasaki H."/>
            <person name="Sato K."/>
            <person name="Schoenbach C."/>
            <person name="Seya T."/>
            <person name="Shibata Y."/>
            <person name="Storch K.-F."/>
            <person name="Suzuki H."/>
            <person name="Toyo-oka K."/>
            <person name="Wang K.H."/>
            <person name="Weitz C."/>
            <person name="Whittaker C."/>
            <person name="Wilming L."/>
            <person name="Wynshaw-Boris A."/>
            <person name="Yoshida K."/>
            <person name="Hasegawa Y."/>
            <person name="Kawaji H."/>
            <person name="Kohtsuki S."/>
            <person name="Hayashizaki Y."/>
        </authorList>
    </citation>
    <scope>NUCLEOTIDE SEQUENCE [LARGE SCALE MRNA]</scope>
    <source>
        <strain>C57BL/6J</strain>
    </source>
</reference>
<reference key="4">
    <citation type="journal article" date="2005" name="Science">
        <title>The transcriptional landscape of the mammalian genome.</title>
        <authorList>
            <person name="Carninci P."/>
            <person name="Kasukawa T."/>
            <person name="Katayama S."/>
            <person name="Gough J."/>
            <person name="Frith M.C."/>
            <person name="Maeda N."/>
            <person name="Oyama R."/>
            <person name="Ravasi T."/>
            <person name="Lenhard B."/>
            <person name="Wells C."/>
            <person name="Kodzius R."/>
            <person name="Shimokawa K."/>
            <person name="Bajic V.B."/>
            <person name="Brenner S.E."/>
            <person name="Batalov S."/>
            <person name="Forrest A.R."/>
            <person name="Zavolan M."/>
            <person name="Davis M.J."/>
            <person name="Wilming L.G."/>
            <person name="Aidinis V."/>
            <person name="Allen J.E."/>
            <person name="Ambesi-Impiombato A."/>
            <person name="Apweiler R."/>
            <person name="Aturaliya R.N."/>
            <person name="Bailey T.L."/>
            <person name="Bansal M."/>
            <person name="Baxter L."/>
            <person name="Beisel K.W."/>
            <person name="Bersano T."/>
            <person name="Bono H."/>
            <person name="Chalk A.M."/>
            <person name="Chiu K.P."/>
            <person name="Choudhary V."/>
            <person name="Christoffels A."/>
            <person name="Clutterbuck D.R."/>
            <person name="Crowe M.L."/>
            <person name="Dalla E."/>
            <person name="Dalrymple B.P."/>
            <person name="de Bono B."/>
            <person name="Della Gatta G."/>
            <person name="di Bernardo D."/>
            <person name="Down T."/>
            <person name="Engstrom P."/>
            <person name="Fagiolini M."/>
            <person name="Faulkner G."/>
            <person name="Fletcher C.F."/>
            <person name="Fukushima T."/>
            <person name="Furuno M."/>
            <person name="Futaki S."/>
            <person name="Gariboldi M."/>
            <person name="Georgii-Hemming P."/>
            <person name="Gingeras T.R."/>
            <person name="Gojobori T."/>
            <person name="Green R.E."/>
            <person name="Gustincich S."/>
            <person name="Harbers M."/>
            <person name="Hayashi Y."/>
            <person name="Hensch T.K."/>
            <person name="Hirokawa N."/>
            <person name="Hill D."/>
            <person name="Huminiecki L."/>
            <person name="Iacono M."/>
            <person name="Ikeo K."/>
            <person name="Iwama A."/>
            <person name="Ishikawa T."/>
            <person name="Jakt M."/>
            <person name="Kanapin A."/>
            <person name="Katoh M."/>
            <person name="Kawasawa Y."/>
            <person name="Kelso J."/>
            <person name="Kitamura H."/>
            <person name="Kitano H."/>
            <person name="Kollias G."/>
            <person name="Krishnan S.P."/>
            <person name="Kruger A."/>
            <person name="Kummerfeld S.K."/>
            <person name="Kurochkin I.V."/>
            <person name="Lareau L.F."/>
            <person name="Lazarevic D."/>
            <person name="Lipovich L."/>
            <person name="Liu J."/>
            <person name="Liuni S."/>
            <person name="McWilliam S."/>
            <person name="Madan Babu M."/>
            <person name="Madera M."/>
            <person name="Marchionni L."/>
            <person name="Matsuda H."/>
            <person name="Matsuzawa S."/>
            <person name="Miki H."/>
            <person name="Mignone F."/>
            <person name="Miyake S."/>
            <person name="Morris K."/>
            <person name="Mottagui-Tabar S."/>
            <person name="Mulder N."/>
            <person name="Nakano N."/>
            <person name="Nakauchi H."/>
            <person name="Ng P."/>
            <person name="Nilsson R."/>
            <person name="Nishiguchi S."/>
            <person name="Nishikawa S."/>
            <person name="Nori F."/>
            <person name="Ohara O."/>
            <person name="Okazaki Y."/>
            <person name="Orlando V."/>
            <person name="Pang K.C."/>
            <person name="Pavan W.J."/>
            <person name="Pavesi G."/>
            <person name="Pesole G."/>
            <person name="Petrovsky N."/>
            <person name="Piazza S."/>
            <person name="Reed J."/>
            <person name="Reid J.F."/>
            <person name="Ring B.Z."/>
            <person name="Ringwald M."/>
            <person name="Rost B."/>
            <person name="Ruan Y."/>
            <person name="Salzberg S.L."/>
            <person name="Sandelin A."/>
            <person name="Schneider C."/>
            <person name="Schoenbach C."/>
            <person name="Sekiguchi K."/>
            <person name="Semple C.A."/>
            <person name="Seno S."/>
            <person name="Sessa L."/>
            <person name="Sheng Y."/>
            <person name="Shibata Y."/>
            <person name="Shimada H."/>
            <person name="Shimada K."/>
            <person name="Silva D."/>
            <person name="Sinclair B."/>
            <person name="Sperling S."/>
            <person name="Stupka E."/>
            <person name="Sugiura K."/>
            <person name="Sultana R."/>
            <person name="Takenaka Y."/>
            <person name="Taki K."/>
            <person name="Tammoja K."/>
            <person name="Tan S.L."/>
            <person name="Tang S."/>
            <person name="Taylor M.S."/>
            <person name="Tegner J."/>
            <person name="Teichmann S.A."/>
            <person name="Ueda H.R."/>
            <person name="van Nimwegen E."/>
            <person name="Verardo R."/>
            <person name="Wei C.L."/>
            <person name="Yagi K."/>
            <person name="Yamanishi H."/>
            <person name="Zabarovsky E."/>
            <person name="Zhu S."/>
            <person name="Zimmer A."/>
            <person name="Hide W."/>
            <person name="Bult C."/>
            <person name="Grimmond S.M."/>
            <person name="Teasdale R.D."/>
            <person name="Liu E.T."/>
            <person name="Brusic V."/>
            <person name="Quackenbush J."/>
            <person name="Wahlestedt C."/>
            <person name="Mattick J.S."/>
            <person name="Hume D.A."/>
            <person name="Kai C."/>
            <person name="Sasaki D."/>
            <person name="Tomaru Y."/>
            <person name="Fukuda S."/>
            <person name="Kanamori-Katayama M."/>
            <person name="Suzuki M."/>
            <person name="Aoki J."/>
            <person name="Arakawa T."/>
            <person name="Iida J."/>
            <person name="Imamura K."/>
            <person name="Itoh M."/>
            <person name="Kato T."/>
            <person name="Kawaji H."/>
            <person name="Kawagashira N."/>
            <person name="Kawashima T."/>
            <person name="Kojima M."/>
            <person name="Kondo S."/>
            <person name="Konno H."/>
            <person name="Nakano K."/>
            <person name="Ninomiya N."/>
            <person name="Nishio T."/>
            <person name="Okada M."/>
            <person name="Plessy C."/>
            <person name="Shibata K."/>
            <person name="Shiraki T."/>
            <person name="Suzuki S."/>
            <person name="Tagami M."/>
            <person name="Waki K."/>
            <person name="Watahiki A."/>
            <person name="Okamura-Oho Y."/>
            <person name="Suzuki H."/>
            <person name="Kawai J."/>
            <person name="Hayashizaki Y."/>
        </authorList>
    </citation>
    <scope>NUCLEOTIDE SEQUENCE [LARGE SCALE MRNA]</scope>
    <source>
        <strain>C57BL/6J</strain>
    </source>
</reference>
<reference key="5">
    <citation type="journal article" date="2002" name="Proc. Natl. Acad. Sci. U.S.A.">
        <title>Generation and initial analysis of more than 15,000 full-length human and mouse cDNA sequences.</title>
        <authorList>
            <consortium name="Mammalian Gene Collection Program Team"/>
            <person name="Strausberg R.L."/>
            <person name="Feingold E.A."/>
            <person name="Grouse L.H."/>
            <person name="Derge J.G."/>
            <person name="Klausner R.D."/>
            <person name="Collins F.S."/>
            <person name="Wagner L."/>
            <person name="Shenmen C.M."/>
            <person name="Schuler G.D."/>
            <person name="Altschul S.F."/>
            <person name="Zeeberg B."/>
            <person name="Buetow K.H."/>
            <person name="Schaefer C.F."/>
            <person name="Bhat N.K."/>
            <person name="Hopkins R.F."/>
            <person name="Jordan H."/>
            <person name="Moore T."/>
            <person name="Max S.I."/>
            <person name="Wang J."/>
            <person name="Hsieh F."/>
            <person name="Diatchenko L."/>
            <person name="Marusina K."/>
            <person name="Farmer A.A."/>
            <person name="Rubin G.M."/>
            <person name="Hong L."/>
            <person name="Stapleton M."/>
            <person name="Soares M.B."/>
            <person name="Bonaldo M.F."/>
            <person name="Casavant T.L."/>
            <person name="Scheetz T.E."/>
            <person name="Brownstein M.J."/>
            <person name="Usdin T.B."/>
            <person name="Toshiyuki S."/>
            <person name="Carninci P."/>
            <person name="Prange C."/>
            <person name="Raha S.S."/>
            <person name="Loquellano N.A."/>
            <person name="Peters G.J."/>
            <person name="Abramson R.D."/>
            <person name="Mullahy S.J."/>
            <person name="Bosak S.A."/>
            <person name="McEwan P.J."/>
            <person name="McKernan K.J."/>
            <person name="Malek J.A."/>
            <person name="Gunaratne P.H."/>
            <person name="Richards S."/>
            <person name="Worley K.C."/>
            <person name="Hale S."/>
            <person name="Garcia A.M."/>
            <person name="Gay L.J."/>
            <person name="Hulyk S.W."/>
            <person name="Villalon D.K."/>
            <person name="Muzny D.M."/>
            <person name="Sodergren E.J."/>
            <person name="Lu X."/>
            <person name="Gibbs R.A."/>
            <person name="Fahey J."/>
            <person name="Helton E."/>
            <person name="Ketteman M."/>
            <person name="Madan A."/>
            <person name="Rodrigues S."/>
            <person name="Sanchez A."/>
            <person name="Whiting M."/>
            <person name="Madan A."/>
            <person name="Young A.C."/>
            <person name="Shevchenko Y."/>
            <person name="Bouffard G.G."/>
            <person name="Blakesley R.W."/>
            <person name="Touchman J.W."/>
            <person name="Green E.D."/>
            <person name="Dickson M.C."/>
            <person name="Rodriguez A.C."/>
            <person name="Grimwood J."/>
            <person name="Schmutz J."/>
            <person name="Myers R.M."/>
            <person name="Butterfield Y.S."/>
            <person name="Krzywinski M.I."/>
            <person name="Skalska U."/>
            <person name="Smailus D.E."/>
            <person name="Schnerch A."/>
            <person name="Schein J.E."/>
            <person name="Jones S.J."/>
            <person name="Marra M.A."/>
        </authorList>
    </citation>
    <scope>NUCLEOTIDE SEQUENCE [LARGE SCALE MRNA]</scope>
</reference>
<reference key="6">
    <citation type="journal article" date="1999" name="Mamm. Genome">
        <title>The mouse silver locus encodes a single transcript truncated by the silver mutation.</title>
        <authorList>
            <person name="Martinez-Esparza M."/>
            <person name="Jimenez-Cervantes C."/>
            <person name="Bennett D.C."/>
            <person name="Lozano J.A."/>
            <person name="Solano F."/>
            <person name="Garcia-Borron J.C."/>
        </authorList>
    </citation>
    <scope>SILVER VARIANT 602-TRP--VAL-626</scope>
</reference>
<reference key="7">
    <citation type="journal article" date="2001" name="Mol. Biol. Cell">
        <title>Pmel17 initiates premelanosome morphogenesis within multivesicular bodies.</title>
        <authorList>
            <person name="Berson J.F."/>
            <person name="Harper D.C."/>
            <person name="Tenza D."/>
            <person name="Raposo G."/>
            <person name="Marks M.S."/>
        </authorList>
    </citation>
    <scope>PROTEOLYTIC PROCESSING</scope>
    <scope>TISSUE SPECIFICITY</scope>
</reference>
<reference key="8">
    <citation type="journal article" date="2006" name="Mol. Biol. Cell">
        <title>Dual loss of ER export and endocytic signals with altered melanosome morphology in the silver mutation of Pmel17.</title>
        <authorList>
            <person name="Theos A.C."/>
            <person name="Berson J.F."/>
            <person name="Theos S.C."/>
            <person name="Herman K.E."/>
            <person name="Harper D.C."/>
            <person name="Tenza D."/>
            <person name="Sviderskaya E.V."/>
            <person name="Lamoreux M.L."/>
            <person name="Bennett D.C."/>
            <person name="Raposo G."/>
            <person name="Marks M.S."/>
        </authorList>
    </citation>
    <scope>GLYCOSYLATION</scope>
</reference>
<reference key="9">
    <citation type="journal article" date="2011" name="PLoS Genet.">
        <title>Inactivation of Pmel alters melanosome shape but has only a subtle effect on visible pigmentation.</title>
        <authorList>
            <person name="Hellstroem A.R."/>
            <person name="Watt B."/>
            <person name="Fard S.S."/>
            <person name="Tenza D."/>
            <person name="Mannstroem P."/>
            <person name="Narfstroem K."/>
            <person name="Ekesten B."/>
            <person name="Ito S."/>
            <person name="Wakamatsu K."/>
            <person name="Larsson J."/>
            <person name="Ulfendahl M."/>
            <person name="Kullander K."/>
            <person name="Raposo G."/>
            <person name="Kerje S."/>
            <person name="Hallboeoek F."/>
            <person name="Marks M.S."/>
            <person name="Andersson L."/>
        </authorList>
    </citation>
    <scope>DISRUPTION PHENOTYPE</scope>
    <scope>FUNCTION</scope>
    <scope>TISSUE SPECIFICITY</scope>
</reference>
<gene>
    <name type="primary">Pmel</name>
    <name type="synonym">D10H12S53E</name>
    <name type="synonym">Pmel17</name>
    <name type="synonym">Si</name>
    <name type="synonym">Silv</name>
</gene>
<dbReference type="EMBL" id="U14133">
    <property type="protein sequence ID" value="AAA69538.1"/>
    <property type="molecule type" value="mRNA"/>
</dbReference>
<dbReference type="EMBL" id="AK012808">
    <property type="protein sequence ID" value="BAB28486.1"/>
    <property type="molecule type" value="mRNA"/>
</dbReference>
<dbReference type="EMBL" id="AK131956">
    <property type="protein sequence ID" value="BAE20900.1"/>
    <property type="molecule type" value="mRNA"/>
</dbReference>
<dbReference type="EMBL" id="MH882516">
    <property type="protein sequence ID" value="AYX41645.1"/>
    <property type="molecule type" value="mRNA"/>
</dbReference>
<dbReference type="EMBL" id="BC082555">
    <property type="protein sequence ID" value="AAH82555.1"/>
    <property type="molecule type" value="mRNA"/>
</dbReference>
<dbReference type="CCDS" id="CCDS36091.1"/>
<dbReference type="PIR" id="S53871">
    <property type="entry name" value="S53871"/>
</dbReference>
<dbReference type="RefSeq" id="NP_068682.2">
    <property type="nucleotide sequence ID" value="NM_021882.4"/>
</dbReference>
<dbReference type="RefSeq" id="XP_006513468.1">
    <property type="nucleotide sequence ID" value="XM_006513405.5"/>
</dbReference>
<dbReference type="RefSeq" id="XP_030100827.1">
    <property type="nucleotide sequence ID" value="XM_030244967.1"/>
</dbReference>
<dbReference type="SMR" id="Q60696"/>
<dbReference type="FunCoup" id="Q60696">
    <property type="interactions" value="220"/>
</dbReference>
<dbReference type="STRING" id="10090.ENSMUSP00000051869"/>
<dbReference type="GlyCosmos" id="Q60696">
    <property type="glycosylation" value="4 sites, No reported glycans"/>
</dbReference>
<dbReference type="GlyGen" id="Q60696">
    <property type="glycosylation" value="5 sites, 1 N-linked glycan (1 site)"/>
</dbReference>
<dbReference type="iPTMnet" id="Q60696"/>
<dbReference type="PhosphoSitePlus" id="Q60696"/>
<dbReference type="PaxDb" id="10090-ENSMUSP00000051869"/>
<dbReference type="ProteomicsDB" id="289634"/>
<dbReference type="ProteomicsDB" id="332617"/>
<dbReference type="ABCD" id="Q60696">
    <property type="antibodies" value="1 sequenced antibody"/>
</dbReference>
<dbReference type="Antibodypedia" id="746">
    <property type="antibodies" value="1206 antibodies from 39 providers"/>
</dbReference>
<dbReference type="DNASU" id="20431"/>
<dbReference type="Ensembl" id="ENSMUST00000054125.9">
    <property type="protein sequence ID" value="ENSMUSP00000051869.8"/>
    <property type="gene ID" value="ENSMUSG00000025359.11"/>
</dbReference>
<dbReference type="GeneID" id="20431"/>
<dbReference type="KEGG" id="mmu:20431"/>
<dbReference type="AGR" id="MGI:98301"/>
<dbReference type="CTD" id="6490"/>
<dbReference type="MGI" id="MGI:98301">
    <property type="gene designation" value="Pmel"/>
</dbReference>
<dbReference type="VEuPathDB" id="HostDB:ENSMUSG00000025359"/>
<dbReference type="eggNOG" id="ENOG502QV5K">
    <property type="taxonomic scope" value="Eukaryota"/>
</dbReference>
<dbReference type="GeneTree" id="ENSGT00950000183188"/>
<dbReference type="HOGENOM" id="CLU_017264_0_0_1"/>
<dbReference type="InParanoid" id="Q60696"/>
<dbReference type="OMA" id="RDQDWLG"/>
<dbReference type="OrthoDB" id="9939762at2759"/>
<dbReference type="PhylomeDB" id="Q60696"/>
<dbReference type="TreeFam" id="TF334865"/>
<dbReference type="BioGRID-ORCS" id="20431">
    <property type="hits" value="4 hits in 80 CRISPR screens"/>
</dbReference>
<dbReference type="ChiTaRS" id="Pmel">
    <property type="organism name" value="mouse"/>
</dbReference>
<dbReference type="PRO" id="PR:Q60696"/>
<dbReference type="Proteomes" id="UP000000589">
    <property type="component" value="Chromosome 10"/>
</dbReference>
<dbReference type="RNAct" id="Q60696">
    <property type="molecule type" value="protein"/>
</dbReference>
<dbReference type="Bgee" id="ENSMUSG00000025359">
    <property type="expression patterns" value="Expressed in iris and 124 other cell types or tissues"/>
</dbReference>
<dbReference type="GO" id="GO:0033106">
    <property type="term" value="C:cis-Golgi network membrane"/>
    <property type="evidence" value="ECO:0007669"/>
    <property type="project" value="Ensembl"/>
</dbReference>
<dbReference type="GO" id="GO:0005789">
    <property type="term" value="C:endoplasmic reticulum membrane"/>
    <property type="evidence" value="ECO:0007669"/>
    <property type="project" value="UniProtKB-SubCell"/>
</dbReference>
<dbReference type="GO" id="GO:0070062">
    <property type="term" value="C:extracellular exosome"/>
    <property type="evidence" value="ECO:0000250"/>
    <property type="project" value="UniProtKB"/>
</dbReference>
<dbReference type="GO" id="GO:0042470">
    <property type="term" value="C:melanosome"/>
    <property type="evidence" value="ECO:0000314"/>
    <property type="project" value="MGI"/>
</dbReference>
<dbReference type="GO" id="GO:0033162">
    <property type="term" value="C:melanosome membrane"/>
    <property type="evidence" value="ECO:0007669"/>
    <property type="project" value="Ensembl"/>
</dbReference>
<dbReference type="GO" id="GO:0032585">
    <property type="term" value="C:multivesicular body membrane"/>
    <property type="evidence" value="ECO:0007669"/>
    <property type="project" value="Ensembl"/>
</dbReference>
<dbReference type="GO" id="GO:0097487">
    <property type="term" value="C:multivesicular body, internal vesicle"/>
    <property type="evidence" value="ECO:0000250"/>
    <property type="project" value="UniProtKB"/>
</dbReference>
<dbReference type="GO" id="GO:0042802">
    <property type="term" value="F:identical protein binding"/>
    <property type="evidence" value="ECO:0007669"/>
    <property type="project" value="Ensembl"/>
</dbReference>
<dbReference type="GO" id="GO:0042438">
    <property type="term" value="P:melanin biosynthetic process"/>
    <property type="evidence" value="ECO:0000315"/>
    <property type="project" value="MGI"/>
</dbReference>
<dbReference type="GO" id="GO:0032438">
    <property type="term" value="P:melanosome organization"/>
    <property type="evidence" value="ECO:0007669"/>
    <property type="project" value="Ensembl"/>
</dbReference>
<dbReference type="GO" id="GO:0048023">
    <property type="term" value="P:positive regulation of melanin biosynthetic process"/>
    <property type="evidence" value="ECO:0000315"/>
    <property type="project" value="CACAO"/>
</dbReference>
<dbReference type="CDD" id="cd00146">
    <property type="entry name" value="PKD"/>
    <property type="match status" value="1"/>
</dbReference>
<dbReference type="Gene3D" id="2.60.40.10">
    <property type="entry name" value="Immunoglobulins"/>
    <property type="match status" value="1"/>
</dbReference>
<dbReference type="InterPro" id="IPR013783">
    <property type="entry name" value="Ig-like_fold"/>
</dbReference>
<dbReference type="InterPro" id="IPR045219">
    <property type="entry name" value="PKAT"/>
</dbReference>
<dbReference type="InterPro" id="IPR046846">
    <property type="entry name" value="PKAT_KLD"/>
</dbReference>
<dbReference type="InterPro" id="IPR022409">
    <property type="entry name" value="PKD/Chitinase_dom"/>
</dbReference>
<dbReference type="InterPro" id="IPR000601">
    <property type="entry name" value="PKD_dom"/>
</dbReference>
<dbReference type="InterPro" id="IPR035986">
    <property type="entry name" value="PKD_dom_sf"/>
</dbReference>
<dbReference type="PANTHER" id="PTHR11861:SF1">
    <property type="entry name" value="MELANOCYTE PROTEIN PMEL"/>
    <property type="match status" value="1"/>
</dbReference>
<dbReference type="PANTHER" id="PTHR11861">
    <property type="entry name" value="MELANOCYTE PROTEIN PMEL 17-RELATED"/>
    <property type="match status" value="1"/>
</dbReference>
<dbReference type="Pfam" id="PF20433">
    <property type="entry name" value="PKAT_KLD"/>
    <property type="match status" value="1"/>
</dbReference>
<dbReference type="Pfam" id="PF00801">
    <property type="entry name" value="PKD"/>
    <property type="match status" value="1"/>
</dbReference>
<dbReference type="SMART" id="SM00089">
    <property type="entry name" value="PKD"/>
    <property type="match status" value="1"/>
</dbReference>
<dbReference type="SUPFAM" id="SSF49299">
    <property type="entry name" value="PKD domain"/>
    <property type="match status" value="1"/>
</dbReference>
<dbReference type="PROSITE" id="PS50093">
    <property type="entry name" value="PKD"/>
    <property type="match status" value="1"/>
</dbReference>
<name>PMEL_MOUSE</name>
<organism>
    <name type="scientific">Mus musculus</name>
    <name type="common">Mouse</name>
    <dbReference type="NCBI Taxonomy" id="10090"/>
    <lineage>
        <taxon>Eukaryota</taxon>
        <taxon>Metazoa</taxon>
        <taxon>Chordata</taxon>
        <taxon>Craniata</taxon>
        <taxon>Vertebrata</taxon>
        <taxon>Euteleostomi</taxon>
        <taxon>Mammalia</taxon>
        <taxon>Eutheria</taxon>
        <taxon>Euarchontoglires</taxon>
        <taxon>Glires</taxon>
        <taxon>Rodentia</taxon>
        <taxon>Myomorpha</taxon>
        <taxon>Muroidea</taxon>
        <taxon>Muridae</taxon>
        <taxon>Murinae</taxon>
        <taxon>Mus</taxon>
        <taxon>Mus</taxon>
    </lineage>
</organism>